<keyword id="KW-0997">Cell inner membrane</keyword>
<keyword id="KW-1003">Cell membrane</keyword>
<keyword id="KW-0472">Membrane</keyword>
<keyword id="KW-0812">Transmembrane</keyword>
<keyword id="KW-1133">Transmembrane helix</keyword>
<dbReference type="EMBL" id="AM933172">
    <property type="protein sequence ID" value="CAR32877.1"/>
    <property type="molecule type" value="Genomic_DNA"/>
</dbReference>
<dbReference type="RefSeq" id="WP_000808682.1">
    <property type="nucleotide sequence ID" value="NC_011294.1"/>
</dbReference>
<dbReference type="KEGG" id="set:SEN1299"/>
<dbReference type="HOGENOM" id="CLU_089554_2_0_6"/>
<dbReference type="Proteomes" id="UP000000613">
    <property type="component" value="Chromosome"/>
</dbReference>
<dbReference type="GO" id="GO:0005886">
    <property type="term" value="C:plasma membrane"/>
    <property type="evidence" value="ECO:0007669"/>
    <property type="project" value="UniProtKB-SubCell"/>
</dbReference>
<dbReference type="HAMAP" id="MF_00189">
    <property type="entry name" value="YciB"/>
    <property type="match status" value="1"/>
</dbReference>
<dbReference type="InterPro" id="IPR006008">
    <property type="entry name" value="YciB"/>
</dbReference>
<dbReference type="NCBIfam" id="TIGR00997">
    <property type="entry name" value="ispZ"/>
    <property type="match status" value="1"/>
</dbReference>
<dbReference type="NCBIfam" id="NF001324">
    <property type="entry name" value="PRK00259.1-2"/>
    <property type="match status" value="1"/>
</dbReference>
<dbReference type="NCBIfam" id="NF001325">
    <property type="entry name" value="PRK00259.1-3"/>
    <property type="match status" value="1"/>
</dbReference>
<dbReference type="NCBIfam" id="NF001326">
    <property type="entry name" value="PRK00259.1-4"/>
    <property type="match status" value="1"/>
</dbReference>
<dbReference type="PANTHER" id="PTHR36917:SF1">
    <property type="entry name" value="INNER MEMBRANE-SPANNING PROTEIN YCIB"/>
    <property type="match status" value="1"/>
</dbReference>
<dbReference type="PANTHER" id="PTHR36917">
    <property type="entry name" value="INTRACELLULAR SEPTATION PROTEIN A-RELATED"/>
    <property type="match status" value="1"/>
</dbReference>
<dbReference type="Pfam" id="PF04279">
    <property type="entry name" value="IspA"/>
    <property type="match status" value="1"/>
</dbReference>
<reference key="1">
    <citation type="journal article" date="2008" name="Genome Res.">
        <title>Comparative genome analysis of Salmonella enteritidis PT4 and Salmonella gallinarum 287/91 provides insights into evolutionary and host adaptation pathways.</title>
        <authorList>
            <person name="Thomson N.R."/>
            <person name="Clayton D.J."/>
            <person name="Windhorst D."/>
            <person name="Vernikos G."/>
            <person name="Davidson S."/>
            <person name="Churcher C."/>
            <person name="Quail M.A."/>
            <person name="Stevens M."/>
            <person name="Jones M.A."/>
            <person name="Watson M."/>
            <person name="Barron A."/>
            <person name="Layton A."/>
            <person name="Pickard D."/>
            <person name="Kingsley R.A."/>
            <person name="Bignell A."/>
            <person name="Clark L."/>
            <person name="Harris B."/>
            <person name="Ormond D."/>
            <person name="Abdellah Z."/>
            <person name="Brooks K."/>
            <person name="Cherevach I."/>
            <person name="Chillingworth T."/>
            <person name="Woodward J."/>
            <person name="Norberczak H."/>
            <person name="Lord A."/>
            <person name="Arrowsmith C."/>
            <person name="Jagels K."/>
            <person name="Moule S."/>
            <person name="Mungall K."/>
            <person name="Saunders M."/>
            <person name="Whitehead S."/>
            <person name="Chabalgoity J.A."/>
            <person name="Maskell D."/>
            <person name="Humphreys T."/>
            <person name="Roberts M."/>
            <person name="Barrow P.A."/>
            <person name="Dougan G."/>
            <person name="Parkhill J."/>
        </authorList>
    </citation>
    <scope>NUCLEOTIDE SEQUENCE [LARGE SCALE GENOMIC DNA]</scope>
    <source>
        <strain>P125109</strain>
    </source>
</reference>
<evidence type="ECO:0000255" key="1">
    <source>
        <dbReference type="HAMAP-Rule" id="MF_00189"/>
    </source>
</evidence>
<comment type="function">
    <text evidence="1">Plays a role in cell envelope biogenesis, maintenance of cell envelope integrity and membrane homeostasis.</text>
</comment>
<comment type="subcellular location">
    <subcellularLocation>
        <location evidence="1">Cell inner membrane</location>
        <topology evidence="1">Multi-pass membrane protein</topology>
    </subcellularLocation>
</comment>
<comment type="similarity">
    <text evidence="1">Belongs to the YciB family.</text>
</comment>
<proteinExistence type="inferred from homology"/>
<protein>
    <recommendedName>
        <fullName evidence="1">Inner membrane-spanning protein YciB</fullName>
    </recommendedName>
</protein>
<name>YCIB_SALEP</name>
<gene>
    <name evidence="1" type="primary">yciB</name>
    <name type="ordered locus">SEN1299</name>
</gene>
<sequence length="179" mass="20763">MKQFLDFLPLVVFFAFYKLYDIYAATSALIVATAIVLIYSWVRYRKIEKMALITFVLVAVFGGLTLFFHNDEFIKWKVTVIYALFAGALLISQWVMKKPLIQRMLGKELALPQQVWSKLNLAWALFFIACGLANIYIAFWLPQNIWVNFKVFGLTALTLIFTLLSGVYIYRHLPQEDKS</sequence>
<feature type="chain" id="PRO_1000098892" description="Inner membrane-spanning protein YciB">
    <location>
        <begin position="1"/>
        <end position="179"/>
    </location>
</feature>
<feature type="transmembrane region" description="Helical" evidence="1">
    <location>
        <begin position="22"/>
        <end position="42"/>
    </location>
</feature>
<feature type="transmembrane region" description="Helical" evidence="1">
    <location>
        <begin position="50"/>
        <end position="70"/>
    </location>
</feature>
<feature type="transmembrane region" description="Helical" evidence="1">
    <location>
        <begin position="76"/>
        <end position="96"/>
    </location>
</feature>
<feature type="transmembrane region" description="Helical" evidence="1">
    <location>
        <begin position="121"/>
        <end position="141"/>
    </location>
</feature>
<feature type="transmembrane region" description="Helical" evidence="1">
    <location>
        <begin position="149"/>
        <end position="169"/>
    </location>
</feature>
<accession>B5R3N5</accession>
<organism>
    <name type="scientific">Salmonella enteritidis PT4 (strain P125109)</name>
    <dbReference type="NCBI Taxonomy" id="550537"/>
    <lineage>
        <taxon>Bacteria</taxon>
        <taxon>Pseudomonadati</taxon>
        <taxon>Pseudomonadota</taxon>
        <taxon>Gammaproteobacteria</taxon>
        <taxon>Enterobacterales</taxon>
        <taxon>Enterobacteriaceae</taxon>
        <taxon>Salmonella</taxon>
    </lineage>
</organism>